<organism>
    <name type="scientific">Salmonella choleraesuis (strain SC-B67)</name>
    <dbReference type="NCBI Taxonomy" id="321314"/>
    <lineage>
        <taxon>Bacteria</taxon>
        <taxon>Pseudomonadati</taxon>
        <taxon>Pseudomonadota</taxon>
        <taxon>Gammaproteobacteria</taxon>
        <taxon>Enterobacterales</taxon>
        <taxon>Enterobacteriaceae</taxon>
        <taxon>Salmonella</taxon>
    </lineage>
</organism>
<sequence length="94" mass="10621">MTKSELIERLATQQSHIPAKAVEDAVKEMLEHMASTLAQGERIEIRGFGSFSLHYRAPRTGRNPKTGDKVELEGKYVPHFKPGKELRDRANIYG</sequence>
<feature type="chain" id="PRO_1000060650" description="Integration host factor subunit beta">
    <location>
        <begin position="1"/>
        <end position="94"/>
    </location>
</feature>
<gene>
    <name evidence="1" type="primary">ihfB</name>
    <name evidence="1" type="synonym">himD</name>
    <name type="ordered locus">SCH_0936</name>
</gene>
<proteinExistence type="inferred from homology"/>
<dbReference type="EMBL" id="AE017220">
    <property type="protein sequence ID" value="AAX64842.1"/>
    <property type="molecule type" value="Genomic_DNA"/>
</dbReference>
<dbReference type="RefSeq" id="WP_000167332.1">
    <property type="nucleotide sequence ID" value="NC_006905.1"/>
</dbReference>
<dbReference type="SMR" id="Q57R19"/>
<dbReference type="GeneID" id="84237116"/>
<dbReference type="KEGG" id="sec:SCH_0936"/>
<dbReference type="HOGENOM" id="CLU_105066_2_0_6"/>
<dbReference type="Proteomes" id="UP000000538">
    <property type="component" value="Chromosome"/>
</dbReference>
<dbReference type="GO" id="GO:0005694">
    <property type="term" value="C:chromosome"/>
    <property type="evidence" value="ECO:0007669"/>
    <property type="project" value="InterPro"/>
</dbReference>
<dbReference type="GO" id="GO:0005829">
    <property type="term" value="C:cytosol"/>
    <property type="evidence" value="ECO:0007669"/>
    <property type="project" value="TreeGrafter"/>
</dbReference>
<dbReference type="GO" id="GO:0003677">
    <property type="term" value="F:DNA binding"/>
    <property type="evidence" value="ECO:0007669"/>
    <property type="project" value="UniProtKB-UniRule"/>
</dbReference>
<dbReference type="GO" id="GO:0030527">
    <property type="term" value="F:structural constituent of chromatin"/>
    <property type="evidence" value="ECO:0007669"/>
    <property type="project" value="InterPro"/>
</dbReference>
<dbReference type="GO" id="GO:0006310">
    <property type="term" value="P:DNA recombination"/>
    <property type="evidence" value="ECO:0007669"/>
    <property type="project" value="UniProtKB-UniRule"/>
</dbReference>
<dbReference type="GO" id="GO:0006355">
    <property type="term" value="P:regulation of DNA-templated transcription"/>
    <property type="evidence" value="ECO:0007669"/>
    <property type="project" value="UniProtKB-UniRule"/>
</dbReference>
<dbReference type="GO" id="GO:0006417">
    <property type="term" value="P:regulation of translation"/>
    <property type="evidence" value="ECO:0007669"/>
    <property type="project" value="UniProtKB-UniRule"/>
</dbReference>
<dbReference type="CDD" id="cd13836">
    <property type="entry name" value="IHF_B"/>
    <property type="match status" value="1"/>
</dbReference>
<dbReference type="FunFam" id="4.10.520.10:FF:000003">
    <property type="entry name" value="Integration host factor subunit beta"/>
    <property type="match status" value="1"/>
</dbReference>
<dbReference type="Gene3D" id="4.10.520.10">
    <property type="entry name" value="IHF-like DNA-binding proteins"/>
    <property type="match status" value="1"/>
</dbReference>
<dbReference type="HAMAP" id="MF_00381">
    <property type="entry name" value="IHF_beta"/>
    <property type="match status" value="1"/>
</dbReference>
<dbReference type="InterPro" id="IPR000119">
    <property type="entry name" value="Hist_DNA-bd"/>
</dbReference>
<dbReference type="InterPro" id="IPR020816">
    <property type="entry name" value="Histone-like_DNA-bd_CS"/>
</dbReference>
<dbReference type="InterPro" id="IPR010992">
    <property type="entry name" value="IHF-like_DNA-bd_dom_sf"/>
</dbReference>
<dbReference type="InterPro" id="IPR005685">
    <property type="entry name" value="IHF_beta"/>
</dbReference>
<dbReference type="NCBIfam" id="TIGR00988">
    <property type="entry name" value="hip"/>
    <property type="match status" value="1"/>
</dbReference>
<dbReference type="NCBIfam" id="NF001222">
    <property type="entry name" value="PRK00199.1"/>
    <property type="match status" value="1"/>
</dbReference>
<dbReference type="PANTHER" id="PTHR33175">
    <property type="entry name" value="DNA-BINDING PROTEIN HU"/>
    <property type="match status" value="1"/>
</dbReference>
<dbReference type="PANTHER" id="PTHR33175:SF5">
    <property type="entry name" value="INTEGRATION HOST FACTOR SUBUNIT BETA"/>
    <property type="match status" value="1"/>
</dbReference>
<dbReference type="Pfam" id="PF00216">
    <property type="entry name" value="Bac_DNA_binding"/>
    <property type="match status" value="1"/>
</dbReference>
<dbReference type="PRINTS" id="PR01727">
    <property type="entry name" value="DNABINDINGHU"/>
</dbReference>
<dbReference type="SMART" id="SM00411">
    <property type="entry name" value="BHL"/>
    <property type="match status" value="1"/>
</dbReference>
<dbReference type="SUPFAM" id="SSF47729">
    <property type="entry name" value="IHF-like DNA-binding proteins"/>
    <property type="match status" value="1"/>
</dbReference>
<dbReference type="PROSITE" id="PS00045">
    <property type="entry name" value="HISTONE_LIKE"/>
    <property type="match status" value="1"/>
</dbReference>
<evidence type="ECO:0000255" key="1">
    <source>
        <dbReference type="HAMAP-Rule" id="MF_00381"/>
    </source>
</evidence>
<protein>
    <recommendedName>
        <fullName evidence="1">Integration host factor subunit beta</fullName>
        <shortName evidence="1">IHF-beta</shortName>
    </recommendedName>
</protein>
<keyword id="KW-0233">DNA recombination</keyword>
<keyword id="KW-0238">DNA-binding</keyword>
<keyword id="KW-0804">Transcription</keyword>
<keyword id="KW-0805">Transcription regulation</keyword>
<keyword id="KW-0810">Translation regulation</keyword>
<name>IHFB_SALCH</name>
<reference key="1">
    <citation type="journal article" date="2005" name="Nucleic Acids Res.">
        <title>The genome sequence of Salmonella enterica serovar Choleraesuis, a highly invasive and resistant zoonotic pathogen.</title>
        <authorList>
            <person name="Chiu C.-H."/>
            <person name="Tang P."/>
            <person name="Chu C."/>
            <person name="Hu S."/>
            <person name="Bao Q."/>
            <person name="Yu J."/>
            <person name="Chou Y.-Y."/>
            <person name="Wang H.-S."/>
            <person name="Lee Y.-S."/>
        </authorList>
    </citation>
    <scope>NUCLEOTIDE SEQUENCE [LARGE SCALE GENOMIC DNA]</scope>
    <source>
        <strain>SC-B67</strain>
    </source>
</reference>
<comment type="function">
    <text evidence="1">This protein is one of the two subunits of integration host factor, a specific DNA-binding protein that functions in genetic recombination as well as in transcriptional and translational control.</text>
</comment>
<comment type="subunit">
    <text evidence="1">Heterodimer of an alpha and a beta chain.</text>
</comment>
<comment type="similarity">
    <text evidence="1">Belongs to the bacterial histone-like protein family.</text>
</comment>
<accession>Q57R19</accession>